<comment type="function">
    <text evidence="1">Involved in the anomeric conversion of L-fucose.</text>
</comment>
<comment type="catalytic activity">
    <reaction evidence="1">
        <text>alpha-L-fucose = beta-L-fucose</text>
        <dbReference type="Rhea" id="RHEA:25580"/>
        <dbReference type="ChEBI" id="CHEBI:42548"/>
        <dbReference type="ChEBI" id="CHEBI:42589"/>
        <dbReference type="EC" id="5.1.3.29"/>
    </reaction>
</comment>
<comment type="pathway">
    <text evidence="1">Carbohydrate metabolism; L-fucose metabolism.</text>
</comment>
<comment type="subunit">
    <text evidence="1">Homodecamer.</text>
</comment>
<comment type="subcellular location">
    <subcellularLocation>
        <location evidence="1">Cytoplasm</location>
    </subcellularLocation>
</comment>
<comment type="similarity">
    <text evidence="1">Belongs to the RbsD / FucU family. FucU mutarotase subfamily.</text>
</comment>
<protein>
    <recommendedName>
        <fullName evidence="1">L-fucose mutarotase</fullName>
        <ecNumber evidence="1">5.1.3.29</ecNumber>
    </recommendedName>
    <alternativeName>
        <fullName evidence="1">Fucose 1-epimerase</fullName>
    </alternativeName>
    <alternativeName>
        <fullName evidence="1">Type-2 mutarotase</fullName>
    </alternativeName>
</protein>
<evidence type="ECO:0000255" key="1">
    <source>
        <dbReference type="HAMAP-Rule" id="MF_01662"/>
    </source>
</evidence>
<dbReference type="EC" id="5.1.3.29" evidence="1"/>
<dbReference type="EMBL" id="CP001091">
    <property type="protein sequence ID" value="ACE62399.1"/>
    <property type="molecule type" value="Genomic_DNA"/>
</dbReference>
<dbReference type="RefSeq" id="WP_005605693.1">
    <property type="nucleotide sequence ID" value="NC_010939.1"/>
</dbReference>
<dbReference type="SMR" id="B3H2T2"/>
<dbReference type="KEGG" id="apa:APP7_1747"/>
<dbReference type="HOGENOM" id="CLU_120075_1_0_6"/>
<dbReference type="UniPathway" id="UPA00956"/>
<dbReference type="Proteomes" id="UP000001226">
    <property type="component" value="Chromosome"/>
</dbReference>
<dbReference type="GO" id="GO:0005737">
    <property type="term" value="C:cytoplasm"/>
    <property type="evidence" value="ECO:0007669"/>
    <property type="project" value="UniProtKB-SubCell"/>
</dbReference>
<dbReference type="GO" id="GO:0042806">
    <property type="term" value="F:fucose binding"/>
    <property type="evidence" value="ECO:0007669"/>
    <property type="project" value="InterPro"/>
</dbReference>
<dbReference type="GO" id="GO:0036373">
    <property type="term" value="F:L-fucose mutarotase activity"/>
    <property type="evidence" value="ECO:0007669"/>
    <property type="project" value="UniProtKB-EC"/>
</dbReference>
<dbReference type="GO" id="GO:0036065">
    <property type="term" value="P:fucosylation"/>
    <property type="evidence" value="ECO:0007669"/>
    <property type="project" value="TreeGrafter"/>
</dbReference>
<dbReference type="GO" id="GO:0042354">
    <property type="term" value="P:L-fucose metabolic process"/>
    <property type="evidence" value="ECO:0007669"/>
    <property type="project" value="UniProtKB-UniRule"/>
</dbReference>
<dbReference type="Gene3D" id="3.40.1650.10">
    <property type="entry name" value="RbsD-like domain"/>
    <property type="match status" value="1"/>
</dbReference>
<dbReference type="HAMAP" id="MF_01662">
    <property type="entry name" value="L_fucose_rotase"/>
    <property type="match status" value="1"/>
</dbReference>
<dbReference type="InterPro" id="IPR023751">
    <property type="entry name" value="L-fucose_mutarotase"/>
</dbReference>
<dbReference type="InterPro" id="IPR023750">
    <property type="entry name" value="RbsD-like_sf"/>
</dbReference>
<dbReference type="InterPro" id="IPR050443">
    <property type="entry name" value="RbsD/FucU_mutarotase"/>
</dbReference>
<dbReference type="InterPro" id="IPR007721">
    <property type="entry name" value="RbsD_FucU"/>
</dbReference>
<dbReference type="NCBIfam" id="NF011949">
    <property type="entry name" value="PRK15420.1"/>
    <property type="match status" value="1"/>
</dbReference>
<dbReference type="PANTHER" id="PTHR31690">
    <property type="entry name" value="FUCOSE MUTAROTASE"/>
    <property type="match status" value="1"/>
</dbReference>
<dbReference type="PANTHER" id="PTHR31690:SF4">
    <property type="entry name" value="FUCOSE MUTAROTASE"/>
    <property type="match status" value="1"/>
</dbReference>
<dbReference type="Pfam" id="PF05025">
    <property type="entry name" value="RbsD_FucU"/>
    <property type="match status" value="1"/>
</dbReference>
<dbReference type="SUPFAM" id="SSF102546">
    <property type="entry name" value="RbsD-like"/>
    <property type="match status" value="1"/>
</dbReference>
<keyword id="KW-0119">Carbohydrate metabolism</keyword>
<keyword id="KW-0963">Cytoplasm</keyword>
<keyword id="KW-0294">Fucose metabolism</keyword>
<keyword id="KW-0413">Isomerase</keyword>
<gene>
    <name evidence="1" type="primary">fucU</name>
    <name type="ordered locus">APP7_1747</name>
</gene>
<organism>
    <name type="scientific">Actinobacillus pleuropneumoniae serotype 7 (strain AP76)</name>
    <dbReference type="NCBI Taxonomy" id="537457"/>
    <lineage>
        <taxon>Bacteria</taxon>
        <taxon>Pseudomonadati</taxon>
        <taxon>Pseudomonadota</taxon>
        <taxon>Gammaproteobacteria</taxon>
        <taxon>Pasteurellales</taxon>
        <taxon>Pasteurellaceae</taxon>
        <taxon>Actinobacillus</taxon>
    </lineage>
</organism>
<proteinExistence type="inferred from homology"/>
<name>FUCM_ACTP7</name>
<accession>B3H2T2</accession>
<sequence>MLKGIHPAISPELLKVLAEMGHGDELVLSDAHFPAHSIHSKVIRADGIGVATLLEGISALFEFDQYVEAPLAMMQAVPGDTLDPSVEERYLAAIKKVNGSTPKVERVERFAFYDRAKTAYAVVITGELAKYGNIIIKKGVTPVK</sequence>
<reference key="1">
    <citation type="submission" date="2008-06" db="EMBL/GenBank/DDBJ databases">
        <title>Genome and proteome analysis of A. pleuropneumoniae serotype 7.</title>
        <authorList>
            <person name="Linke B."/>
            <person name="Buettner F."/>
            <person name="Martinez-Arias R."/>
            <person name="Goesmann A."/>
            <person name="Baltes N."/>
            <person name="Tegetmeyer H."/>
            <person name="Singh M."/>
            <person name="Gerlach G.F."/>
        </authorList>
    </citation>
    <scope>NUCLEOTIDE SEQUENCE [LARGE SCALE GENOMIC DNA]</scope>
    <source>
        <strain>AP76</strain>
    </source>
</reference>
<feature type="chain" id="PRO_1000187174" description="L-fucose mutarotase">
    <location>
        <begin position="1"/>
        <end position="144"/>
    </location>
</feature>
<feature type="active site" description="Proton donor" evidence="1">
    <location>
        <position position="22"/>
    </location>
</feature>
<feature type="binding site" evidence="1">
    <location>
        <position position="30"/>
    </location>
    <ligand>
        <name>substrate</name>
    </ligand>
</feature>
<feature type="binding site" evidence="1">
    <location>
        <position position="109"/>
    </location>
    <ligand>
        <name>substrate</name>
    </ligand>
</feature>
<feature type="binding site" evidence="1">
    <location>
        <begin position="131"/>
        <end position="133"/>
    </location>
    <ligand>
        <name>substrate</name>
    </ligand>
</feature>